<accession>Q7SEL0</accession>
<reference key="1">
    <citation type="journal article" date="2003" name="Nature">
        <title>The genome sequence of the filamentous fungus Neurospora crassa.</title>
        <authorList>
            <person name="Galagan J.E."/>
            <person name="Calvo S.E."/>
            <person name="Borkovich K.A."/>
            <person name="Selker E.U."/>
            <person name="Read N.D."/>
            <person name="Jaffe D.B."/>
            <person name="FitzHugh W."/>
            <person name="Ma L.-J."/>
            <person name="Smirnov S."/>
            <person name="Purcell S."/>
            <person name="Rehman B."/>
            <person name="Elkins T."/>
            <person name="Engels R."/>
            <person name="Wang S."/>
            <person name="Nielsen C.B."/>
            <person name="Butler J."/>
            <person name="Endrizzi M."/>
            <person name="Qui D."/>
            <person name="Ianakiev P."/>
            <person name="Bell-Pedersen D."/>
            <person name="Nelson M.A."/>
            <person name="Werner-Washburne M."/>
            <person name="Selitrennikoff C.P."/>
            <person name="Kinsey J.A."/>
            <person name="Braun E.L."/>
            <person name="Zelter A."/>
            <person name="Schulte U."/>
            <person name="Kothe G.O."/>
            <person name="Jedd G."/>
            <person name="Mewes H.-W."/>
            <person name="Staben C."/>
            <person name="Marcotte E."/>
            <person name="Greenberg D."/>
            <person name="Roy A."/>
            <person name="Foley K."/>
            <person name="Naylor J."/>
            <person name="Stange-Thomann N."/>
            <person name="Barrett R."/>
            <person name="Gnerre S."/>
            <person name="Kamal M."/>
            <person name="Kamvysselis M."/>
            <person name="Mauceli E.W."/>
            <person name="Bielke C."/>
            <person name="Rudd S."/>
            <person name="Frishman D."/>
            <person name="Krystofova S."/>
            <person name="Rasmussen C."/>
            <person name="Metzenberg R.L."/>
            <person name="Perkins D.D."/>
            <person name="Kroken S."/>
            <person name="Cogoni C."/>
            <person name="Macino G."/>
            <person name="Catcheside D.E.A."/>
            <person name="Li W."/>
            <person name="Pratt R.J."/>
            <person name="Osmani S.A."/>
            <person name="DeSouza C.P.C."/>
            <person name="Glass N.L."/>
            <person name="Orbach M.J."/>
            <person name="Berglund J.A."/>
            <person name="Voelker R."/>
            <person name="Yarden O."/>
            <person name="Plamann M."/>
            <person name="Seiler S."/>
            <person name="Dunlap J.C."/>
            <person name="Radford A."/>
            <person name="Aramayo R."/>
            <person name="Natvig D.O."/>
            <person name="Alex L.A."/>
            <person name="Mannhaupt G."/>
            <person name="Ebbole D.J."/>
            <person name="Freitag M."/>
            <person name="Paulsen I."/>
            <person name="Sachs M.S."/>
            <person name="Lander E.S."/>
            <person name="Nusbaum C."/>
            <person name="Birren B.W."/>
        </authorList>
    </citation>
    <scope>NUCLEOTIDE SEQUENCE [LARGE SCALE GENOMIC DNA]</scope>
    <source>
        <strain>ATCC 24698 / 74-OR23-1A / CBS 708.71 / DSM 1257 / FGSC 987</strain>
    </source>
</reference>
<organism>
    <name type="scientific">Neurospora crassa (strain ATCC 24698 / 74-OR23-1A / CBS 708.71 / DSM 1257 / FGSC 987)</name>
    <dbReference type="NCBI Taxonomy" id="367110"/>
    <lineage>
        <taxon>Eukaryota</taxon>
        <taxon>Fungi</taxon>
        <taxon>Dikarya</taxon>
        <taxon>Ascomycota</taxon>
        <taxon>Pezizomycotina</taxon>
        <taxon>Sordariomycetes</taxon>
        <taxon>Sordariomycetidae</taxon>
        <taxon>Sordariales</taxon>
        <taxon>Sordariaceae</taxon>
        <taxon>Neurospora</taxon>
    </lineage>
</organism>
<gene>
    <name type="primary">prp-28</name>
    <name type="ORF">NCU02803</name>
</gene>
<sequence>MSTTSRREPPDLAALLRKKKEEEAAAAKPRFIPKKERERLEAEKKAKEEEERKRKEEAKPQPNGTNHNGNRMDGIQSHHNHNPQRNIPTGPKAMRYDDDRGPNGMSNGRDYRDNRDNRDNRDRNQRGAKRGAPNDDEEKRAKMERNDEAELRARYMGPVVNQSTFSAKKKRRRTAANKFNFDWDADDDTSRPFDPIYAERQEPLVRLGGYEMTEEMVMRKAEAIRRGDPETGEERARQYLEQHRRIKEMEQRKNLGKHWSEKKLEDMKERDWRIFKENFGIATKGGAIPNPMRSWEESTLPRRLLDIVKNVGYDEPTPIQRAAIPIALQARDLIGVAVTGSGKTAAFLLPLLVYISELPPLTEYNKNDGPYALILAPTRELVQQIESEAKKFATPLGFTVVSIVGGHSLEEQAFALRNGAEIIVATPGRLVDCLERRLLVFSQCCYTIMDEADRMIDQGFEEPLTKILDAMPVTNEKPDTDDAENPQLMSRYVDGKDRYRQTMMYTATMPPIVERIAKKYLRRPAIVTIGNAGEAVDTVEQRVEFVSGEDKRKKRLQEILNSGQFKPPIIVFVNIKRNCDMVARDIKGMGYSAVTLHGSKTQEQREAALASLRNGQTDILVATDLAGRGIDVPDVSLVVNFNMATNIESYTHRIGRTGRAGKSGVAITFLGPEDNDVLYDLRQIISKSSISKVPDELRRHEAAQNKPQKGQKKLEESNGYSGKGGSWN</sequence>
<comment type="function">
    <text evidence="1">ATP-dependent RNA helicase involved in mRNA splicing. May destabilize the U1/5'-splice site duplex to permit an effective competition for the 5'-splice site by the U6 snRNA, resulting in the switch between U1 and U6 at the 5'-splice site. May also act to unwind the U4/U6 base-pairing interaction in the U4/U6/U5 snRNP, facilitating the first covalent step of splicing (By similarity).</text>
</comment>
<comment type="catalytic activity">
    <reaction>
        <text>ATP + H2O = ADP + phosphate + H(+)</text>
        <dbReference type="Rhea" id="RHEA:13065"/>
        <dbReference type="ChEBI" id="CHEBI:15377"/>
        <dbReference type="ChEBI" id="CHEBI:15378"/>
        <dbReference type="ChEBI" id="CHEBI:30616"/>
        <dbReference type="ChEBI" id="CHEBI:43474"/>
        <dbReference type="ChEBI" id="CHEBI:456216"/>
        <dbReference type="EC" id="3.6.4.13"/>
    </reaction>
</comment>
<comment type="subunit">
    <text evidence="1">Component of the U5 snRNP complex.</text>
</comment>
<comment type="subcellular location">
    <subcellularLocation>
        <location evidence="1">Cytoplasm</location>
    </subcellularLocation>
    <subcellularLocation>
        <location evidence="1">Nucleus</location>
    </subcellularLocation>
</comment>
<comment type="domain">
    <text>The Q motif is unique to and characteristic of the DEAD box family of RNA helicases and controls ATP binding and hydrolysis.</text>
</comment>
<comment type="similarity">
    <text evidence="5">Belongs to the DEAD box helicase family. DDX23/PRP28 subfamily.</text>
</comment>
<name>PRP28_NEUCR</name>
<evidence type="ECO:0000250" key="1"/>
<evidence type="ECO:0000255" key="2">
    <source>
        <dbReference type="PROSITE-ProRule" id="PRU00541"/>
    </source>
</evidence>
<evidence type="ECO:0000255" key="3">
    <source>
        <dbReference type="PROSITE-ProRule" id="PRU00542"/>
    </source>
</evidence>
<evidence type="ECO:0000256" key="4">
    <source>
        <dbReference type="SAM" id="MobiDB-lite"/>
    </source>
</evidence>
<evidence type="ECO:0000305" key="5"/>
<proteinExistence type="inferred from homology"/>
<protein>
    <recommendedName>
        <fullName>Pre-mRNA-splicing ATP-dependent RNA helicase prp-28</fullName>
        <ecNumber>3.6.4.13</ecNumber>
    </recommendedName>
</protein>
<dbReference type="EC" id="3.6.4.13"/>
<dbReference type="EMBL" id="CM002236">
    <property type="protein sequence ID" value="EAA35223.1"/>
    <property type="molecule type" value="Genomic_DNA"/>
</dbReference>
<dbReference type="RefSeq" id="XP_964459.1">
    <property type="nucleotide sequence ID" value="XM_959366.2"/>
</dbReference>
<dbReference type="SMR" id="Q7SEL0"/>
<dbReference type="FunCoup" id="Q7SEL0">
    <property type="interactions" value="875"/>
</dbReference>
<dbReference type="STRING" id="367110.Q7SEL0"/>
<dbReference type="PaxDb" id="5141-EFNCRP00000002412"/>
<dbReference type="EnsemblFungi" id="EAA35223">
    <property type="protein sequence ID" value="EAA35223"/>
    <property type="gene ID" value="NCU02803"/>
</dbReference>
<dbReference type="GeneID" id="3880623"/>
<dbReference type="KEGG" id="ncr:NCU02803"/>
<dbReference type="VEuPathDB" id="FungiDB:NCU02803"/>
<dbReference type="HOGENOM" id="CLU_003041_11_3_1"/>
<dbReference type="InParanoid" id="Q7SEL0"/>
<dbReference type="OMA" id="ARDIKHM"/>
<dbReference type="OrthoDB" id="196131at2759"/>
<dbReference type="Proteomes" id="UP000001805">
    <property type="component" value="Chromosome 1, Linkage Group I"/>
</dbReference>
<dbReference type="GO" id="GO:0071013">
    <property type="term" value="C:catalytic step 2 spliceosome"/>
    <property type="evidence" value="ECO:0000318"/>
    <property type="project" value="GO_Central"/>
</dbReference>
<dbReference type="GO" id="GO:0005737">
    <property type="term" value="C:cytoplasm"/>
    <property type="evidence" value="ECO:0007669"/>
    <property type="project" value="UniProtKB-SubCell"/>
</dbReference>
<dbReference type="GO" id="GO:0005682">
    <property type="term" value="C:U5 snRNP"/>
    <property type="evidence" value="ECO:0007669"/>
    <property type="project" value="EnsemblFungi"/>
</dbReference>
<dbReference type="GO" id="GO:0005524">
    <property type="term" value="F:ATP binding"/>
    <property type="evidence" value="ECO:0007669"/>
    <property type="project" value="UniProtKB-KW"/>
</dbReference>
<dbReference type="GO" id="GO:0016887">
    <property type="term" value="F:ATP hydrolysis activity"/>
    <property type="evidence" value="ECO:0007669"/>
    <property type="project" value="RHEA"/>
</dbReference>
<dbReference type="GO" id="GO:0000384">
    <property type="term" value="F:first spliceosomal transesterification activity"/>
    <property type="evidence" value="ECO:0007669"/>
    <property type="project" value="EnsemblFungi"/>
</dbReference>
<dbReference type="GO" id="GO:0003729">
    <property type="term" value="F:mRNA binding"/>
    <property type="evidence" value="ECO:0000318"/>
    <property type="project" value="GO_Central"/>
</dbReference>
<dbReference type="GO" id="GO:0003724">
    <property type="term" value="F:RNA helicase activity"/>
    <property type="evidence" value="ECO:0007669"/>
    <property type="project" value="UniProtKB-EC"/>
</dbReference>
<dbReference type="GO" id="GO:0000395">
    <property type="term" value="P:mRNA 5'-splice site recognition"/>
    <property type="evidence" value="ECO:0007669"/>
    <property type="project" value="EnsemblFungi"/>
</dbReference>
<dbReference type="GO" id="GO:0000398">
    <property type="term" value="P:mRNA splicing, via spliceosome"/>
    <property type="evidence" value="ECO:0000318"/>
    <property type="project" value="GO_Central"/>
</dbReference>
<dbReference type="CDD" id="cd17945">
    <property type="entry name" value="DEADc_DDX23"/>
    <property type="match status" value="1"/>
</dbReference>
<dbReference type="CDD" id="cd18787">
    <property type="entry name" value="SF2_C_DEAD"/>
    <property type="match status" value="1"/>
</dbReference>
<dbReference type="FunFam" id="3.40.50.300:FF:000322">
    <property type="entry name" value="probable ATP-dependent RNA helicase DDX23"/>
    <property type="match status" value="1"/>
</dbReference>
<dbReference type="Gene3D" id="3.40.50.300">
    <property type="entry name" value="P-loop containing nucleotide triphosphate hydrolases"/>
    <property type="match status" value="2"/>
</dbReference>
<dbReference type="InterPro" id="IPR011545">
    <property type="entry name" value="DEAD/DEAH_box_helicase_dom"/>
</dbReference>
<dbReference type="InterPro" id="IPR014001">
    <property type="entry name" value="Helicase_ATP-bd"/>
</dbReference>
<dbReference type="InterPro" id="IPR001650">
    <property type="entry name" value="Helicase_C-like"/>
</dbReference>
<dbReference type="InterPro" id="IPR027417">
    <property type="entry name" value="P-loop_NTPase"/>
</dbReference>
<dbReference type="InterPro" id="IPR000629">
    <property type="entry name" value="RNA-helicase_DEAD-box_CS"/>
</dbReference>
<dbReference type="InterPro" id="IPR014014">
    <property type="entry name" value="RNA_helicase_DEAD_Q_motif"/>
</dbReference>
<dbReference type="PANTHER" id="PTHR47958">
    <property type="entry name" value="ATP-DEPENDENT RNA HELICASE DBP3"/>
    <property type="match status" value="1"/>
</dbReference>
<dbReference type="Pfam" id="PF25430">
    <property type="entry name" value="DDX23"/>
    <property type="match status" value="1"/>
</dbReference>
<dbReference type="Pfam" id="PF00270">
    <property type="entry name" value="DEAD"/>
    <property type="match status" value="1"/>
</dbReference>
<dbReference type="Pfam" id="PF00271">
    <property type="entry name" value="Helicase_C"/>
    <property type="match status" value="1"/>
</dbReference>
<dbReference type="SMART" id="SM00487">
    <property type="entry name" value="DEXDc"/>
    <property type="match status" value="1"/>
</dbReference>
<dbReference type="SMART" id="SM00490">
    <property type="entry name" value="HELICc"/>
    <property type="match status" value="1"/>
</dbReference>
<dbReference type="SUPFAM" id="SSF52540">
    <property type="entry name" value="P-loop containing nucleoside triphosphate hydrolases"/>
    <property type="match status" value="1"/>
</dbReference>
<dbReference type="PROSITE" id="PS00039">
    <property type="entry name" value="DEAD_ATP_HELICASE"/>
    <property type="match status" value="1"/>
</dbReference>
<dbReference type="PROSITE" id="PS51192">
    <property type="entry name" value="HELICASE_ATP_BIND_1"/>
    <property type="match status" value="1"/>
</dbReference>
<dbReference type="PROSITE" id="PS51194">
    <property type="entry name" value="HELICASE_CTER"/>
    <property type="match status" value="1"/>
</dbReference>
<dbReference type="PROSITE" id="PS51195">
    <property type="entry name" value="Q_MOTIF"/>
    <property type="match status" value="1"/>
</dbReference>
<feature type="chain" id="PRO_0000232376" description="Pre-mRNA-splicing ATP-dependent RNA helicase prp-28">
    <location>
        <begin position="1"/>
        <end position="728"/>
    </location>
</feature>
<feature type="domain" description="Helicase ATP-binding" evidence="2">
    <location>
        <begin position="324"/>
        <end position="527"/>
    </location>
</feature>
<feature type="domain" description="Helicase C-terminal" evidence="3">
    <location>
        <begin position="538"/>
        <end position="701"/>
    </location>
</feature>
<feature type="region of interest" description="Disordered" evidence="4">
    <location>
        <begin position="19"/>
        <end position="155"/>
    </location>
</feature>
<feature type="region of interest" description="Disordered" evidence="4">
    <location>
        <begin position="692"/>
        <end position="728"/>
    </location>
</feature>
<feature type="short sequence motif" description="Q motif">
    <location>
        <begin position="293"/>
        <end position="321"/>
    </location>
</feature>
<feature type="short sequence motif" description="DEAD box">
    <location>
        <begin position="450"/>
        <end position="453"/>
    </location>
</feature>
<feature type="compositionally biased region" description="Basic and acidic residues" evidence="4">
    <location>
        <begin position="33"/>
        <end position="59"/>
    </location>
</feature>
<feature type="compositionally biased region" description="Basic and acidic residues" evidence="4">
    <location>
        <begin position="109"/>
        <end position="125"/>
    </location>
</feature>
<feature type="compositionally biased region" description="Basic and acidic residues" evidence="4">
    <location>
        <begin position="137"/>
        <end position="153"/>
    </location>
</feature>
<feature type="compositionally biased region" description="Basic and acidic residues" evidence="4">
    <location>
        <begin position="693"/>
        <end position="703"/>
    </location>
</feature>
<feature type="binding site" evidence="2">
    <location>
        <begin position="337"/>
        <end position="344"/>
    </location>
    <ligand>
        <name>ATP</name>
        <dbReference type="ChEBI" id="CHEBI:30616"/>
    </ligand>
</feature>
<keyword id="KW-0067">ATP-binding</keyword>
<keyword id="KW-0963">Cytoplasm</keyword>
<keyword id="KW-0347">Helicase</keyword>
<keyword id="KW-0378">Hydrolase</keyword>
<keyword id="KW-0507">mRNA processing</keyword>
<keyword id="KW-0508">mRNA splicing</keyword>
<keyword id="KW-0547">Nucleotide-binding</keyword>
<keyword id="KW-0539">Nucleus</keyword>
<keyword id="KW-1185">Reference proteome</keyword>